<evidence type="ECO:0000255" key="1">
    <source>
        <dbReference type="HAMAP-Rule" id="MF_00813"/>
    </source>
</evidence>
<organism>
    <name type="scientific">Pseudomonas syringae pv. tomato (strain ATCC BAA-871 / DC3000)</name>
    <dbReference type="NCBI Taxonomy" id="223283"/>
    <lineage>
        <taxon>Bacteria</taxon>
        <taxon>Pseudomonadati</taxon>
        <taxon>Pseudomonadota</taxon>
        <taxon>Gammaproteobacteria</taxon>
        <taxon>Pseudomonadales</taxon>
        <taxon>Pseudomonadaceae</taxon>
        <taxon>Pseudomonas</taxon>
    </lineage>
</organism>
<accession>Q87YX4</accession>
<gene>
    <name evidence="1" type="primary">alc</name>
    <name type="ordered locus">PSPTO_3668</name>
</gene>
<feature type="chain" id="PRO_0000205925" description="Probable allantoicase">
    <location>
        <begin position="1"/>
        <end position="331"/>
    </location>
</feature>
<keyword id="KW-0378">Hydrolase</keyword>
<keyword id="KW-0659">Purine metabolism</keyword>
<keyword id="KW-1185">Reference proteome</keyword>
<proteinExistence type="inferred from homology"/>
<name>ALLC_PSESM</name>
<sequence length="331" mass="36737">MKVYAAPFEKFVNLADARLGTKILSVTDDWFADANRLFQPTPAVWKEGVFDDNGKWMDGWESRRKRFEGYDSAVIKLGVAGTLKGVDIDTSFFTGNFPPSASLEACFLASGEPDENTAWTEVLSSVELKGNSHHYHEISHDQAFSHLRFNIYPDGGVARLRVYGVPHRDWSKVTESEQIDLVAALNGGRSIACSDEHYGSMSNILNPGRGVNMGDGWETARRRTPGNDWVIVALGHKGEVEKVIVDTLHFKGNYPDSCSIQGAFVKGGTDSQIETQSLFWRELLPSQKLTMHAEHEFAEQVKAIGPITHIRLNVFPDGGVSRLRVLGKVSR</sequence>
<dbReference type="EC" id="3.5.3.4" evidence="1"/>
<dbReference type="EMBL" id="AE016853">
    <property type="protein sequence ID" value="AAO57137.1"/>
    <property type="molecule type" value="Genomic_DNA"/>
</dbReference>
<dbReference type="RefSeq" id="NP_793442.1">
    <property type="nucleotide sequence ID" value="NC_004578.1"/>
</dbReference>
<dbReference type="RefSeq" id="WP_011104661.1">
    <property type="nucleotide sequence ID" value="NC_004578.1"/>
</dbReference>
<dbReference type="SMR" id="Q87YX4"/>
<dbReference type="STRING" id="223283.PSPTO_3668"/>
<dbReference type="GeneID" id="1185333"/>
<dbReference type="KEGG" id="pst:PSPTO_3668"/>
<dbReference type="eggNOG" id="COG4266">
    <property type="taxonomic scope" value="Bacteria"/>
</dbReference>
<dbReference type="HOGENOM" id="CLU_038797_1_2_6"/>
<dbReference type="OrthoDB" id="2078334at2"/>
<dbReference type="PhylomeDB" id="Q87YX4"/>
<dbReference type="UniPathway" id="UPA00395">
    <property type="reaction ID" value="UER00654"/>
</dbReference>
<dbReference type="Proteomes" id="UP000002515">
    <property type="component" value="Chromosome"/>
</dbReference>
<dbReference type="GO" id="GO:0004037">
    <property type="term" value="F:allantoicase activity"/>
    <property type="evidence" value="ECO:0007669"/>
    <property type="project" value="UniProtKB-UniRule"/>
</dbReference>
<dbReference type="GO" id="GO:0000256">
    <property type="term" value="P:allantoin catabolic process"/>
    <property type="evidence" value="ECO:0007669"/>
    <property type="project" value="UniProtKB-UniRule"/>
</dbReference>
<dbReference type="GO" id="GO:0006144">
    <property type="term" value="P:purine nucleobase metabolic process"/>
    <property type="evidence" value="ECO:0007669"/>
    <property type="project" value="UniProtKB-KW"/>
</dbReference>
<dbReference type="FunFam" id="2.60.120.260:FF:000059">
    <property type="entry name" value="Probable allantoicase"/>
    <property type="match status" value="1"/>
</dbReference>
<dbReference type="FunFam" id="2.60.120.260:FF:000090">
    <property type="entry name" value="Probable allantoicase"/>
    <property type="match status" value="1"/>
</dbReference>
<dbReference type="Gene3D" id="2.60.120.260">
    <property type="entry name" value="Galactose-binding domain-like"/>
    <property type="match status" value="2"/>
</dbReference>
<dbReference type="HAMAP" id="MF_00813">
    <property type="entry name" value="Allantoicase"/>
    <property type="match status" value="1"/>
</dbReference>
<dbReference type="InterPro" id="IPR005164">
    <property type="entry name" value="Allantoicase"/>
</dbReference>
<dbReference type="InterPro" id="IPR015908">
    <property type="entry name" value="Allantoicase_dom"/>
</dbReference>
<dbReference type="InterPro" id="IPR008979">
    <property type="entry name" value="Galactose-bd-like_sf"/>
</dbReference>
<dbReference type="NCBIfam" id="TIGR02961">
    <property type="entry name" value="allantoicase"/>
    <property type="match status" value="1"/>
</dbReference>
<dbReference type="PANTHER" id="PTHR12045">
    <property type="entry name" value="ALLANTOICASE"/>
    <property type="match status" value="1"/>
</dbReference>
<dbReference type="PANTHER" id="PTHR12045:SF3">
    <property type="entry name" value="INACTIVE ALLANTOICASE-RELATED"/>
    <property type="match status" value="1"/>
</dbReference>
<dbReference type="Pfam" id="PF03561">
    <property type="entry name" value="Allantoicase"/>
    <property type="match status" value="2"/>
</dbReference>
<dbReference type="PIRSF" id="PIRSF016516">
    <property type="entry name" value="Allantoicase"/>
    <property type="match status" value="1"/>
</dbReference>
<dbReference type="SUPFAM" id="SSF49785">
    <property type="entry name" value="Galactose-binding domain-like"/>
    <property type="match status" value="2"/>
</dbReference>
<reference key="1">
    <citation type="journal article" date="2003" name="Proc. Natl. Acad. Sci. U.S.A.">
        <title>The complete genome sequence of the Arabidopsis and tomato pathogen Pseudomonas syringae pv. tomato DC3000.</title>
        <authorList>
            <person name="Buell C.R."/>
            <person name="Joardar V."/>
            <person name="Lindeberg M."/>
            <person name="Selengut J."/>
            <person name="Paulsen I.T."/>
            <person name="Gwinn M.L."/>
            <person name="Dodson R.J."/>
            <person name="DeBoy R.T."/>
            <person name="Durkin A.S."/>
            <person name="Kolonay J.F."/>
            <person name="Madupu R."/>
            <person name="Daugherty S.C."/>
            <person name="Brinkac L.M."/>
            <person name="Beanan M.J."/>
            <person name="Haft D.H."/>
            <person name="Nelson W.C."/>
            <person name="Davidsen T.M."/>
            <person name="Zafar N."/>
            <person name="Zhou L."/>
            <person name="Liu J."/>
            <person name="Yuan Q."/>
            <person name="Khouri H.M."/>
            <person name="Fedorova N.B."/>
            <person name="Tran B."/>
            <person name="Russell D."/>
            <person name="Berry K.J."/>
            <person name="Utterback T.R."/>
            <person name="Van Aken S.E."/>
            <person name="Feldblyum T.V."/>
            <person name="D'Ascenzo M."/>
            <person name="Deng W.-L."/>
            <person name="Ramos A.R."/>
            <person name="Alfano J.R."/>
            <person name="Cartinhour S."/>
            <person name="Chatterjee A.K."/>
            <person name="Delaney T.P."/>
            <person name="Lazarowitz S.G."/>
            <person name="Martin G.B."/>
            <person name="Schneider D.J."/>
            <person name="Tang X."/>
            <person name="Bender C.L."/>
            <person name="White O."/>
            <person name="Fraser C.M."/>
            <person name="Collmer A."/>
        </authorList>
    </citation>
    <scope>NUCLEOTIDE SEQUENCE [LARGE SCALE GENOMIC DNA]</scope>
    <source>
        <strain>ATCC BAA-871 / DC3000</strain>
    </source>
</reference>
<comment type="catalytic activity">
    <reaction evidence="1">
        <text>allantoate + H2O = (S)-ureidoglycolate + urea</text>
        <dbReference type="Rhea" id="RHEA:11016"/>
        <dbReference type="ChEBI" id="CHEBI:15377"/>
        <dbReference type="ChEBI" id="CHEBI:16199"/>
        <dbReference type="ChEBI" id="CHEBI:17536"/>
        <dbReference type="ChEBI" id="CHEBI:57296"/>
        <dbReference type="EC" id="3.5.3.4"/>
    </reaction>
</comment>
<comment type="pathway">
    <text evidence="1">Nitrogen metabolism; (S)-allantoin degradation; (S)-ureidoglycolate from allantoate (aminidohydrolase route): step 1/1.</text>
</comment>
<comment type="similarity">
    <text evidence="1">Belongs to the allantoicase family.</text>
</comment>
<protein>
    <recommendedName>
        <fullName evidence="1">Probable allantoicase</fullName>
        <ecNumber evidence="1">3.5.3.4</ecNumber>
    </recommendedName>
    <alternativeName>
        <fullName evidence="1">Allantoate amidinohydrolase</fullName>
    </alternativeName>
</protein>